<reference key="1">
    <citation type="journal article" date="1994" name="Infect. Immun.">
        <title>Genetic, enzymatic, and pathogenic studies of the iron superoxide dismutase of Campylobacter jejuni.</title>
        <authorList>
            <person name="Pesci E.C."/>
            <person name="Cottle D.L."/>
            <person name="Pickett C.L."/>
        </authorList>
    </citation>
    <scope>NUCLEOTIDE SEQUENCE [GENOMIC DNA]</scope>
</reference>
<reference key="2">
    <citation type="submission" date="2006-12" db="EMBL/GenBank/DDBJ databases">
        <authorList>
            <person name="Fouts D.E."/>
            <person name="Nelson K.E."/>
            <person name="Sebastian Y."/>
        </authorList>
    </citation>
    <scope>NUCLEOTIDE SEQUENCE [LARGE SCALE GENOMIC DNA]</scope>
    <source>
        <strain>81-176</strain>
    </source>
</reference>
<organism>
    <name type="scientific">Campylobacter jejuni subsp. jejuni serotype O:23/36 (strain 81-176)</name>
    <dbReference type="NCBI Taxonomy" id="354242"/>
    <lineage>
        <taxon>Bacteria</taxon>
        <taxon>Pseudomonadati</taxon>
        <taxon>Campylobacterota</taxon>
        <taxon>Epsilonproteobacteria</taxon>
        <taxon>Campylobacterales</taxon>
        <taxon>Campylobacteraceae</taxon>
        <taxon>Campylobacter</taxon>
    </lineage>
</organism>
<comment type="function">
    <text>Destroys superoxide anion radicals which are normally produced within the cells and which are toxic to biological systems.</text>
</comment>
<comment type="catalytic activity">
    <reaction>
        <text>2 superoxide + 2 H(+) = H2O2 + O2</text>
        <dbReference type="Rhea" id="RHEA:20696"/>
        <dbReference type="ChEBI" id="CHEBI:15378"/>
        <dbReference type="ChEBI" id="CHEBI:15379"/>
        <dbReference type="ChEBI" id="CHEBI:16240"/>
        <dbReference type="ChEBI" id="CHEBI:18421"/>
        <dbReference type="EC" id="1.15.1.1"/>
    </reaction>
</comment>
<comment type="cofactor">
    <cofactor evidence="1">
        <name>Fe cation</name>
        <dbReference type="ChEBI" id="CHEBI:24875"/>
    </cofactor>
    <text evidence="1">Binds 1 Fe cation per subunit.</text>
</comment>
<comment type="subunit">
    <text evidence="1">Homodimer.</text>
</comment>
<comment type="similarity">
    <text evidence="2">Belongs to the iron/manganese superoxide dismutase family.</text>
</comment>
<sequence length="220" mass="24813">MFELRKLPYDTNAFGDFLSAETFSYHHGKHHNTYVTNLNNLIKDTEFAGKDLVSIIKTSNGGVFNNAAQVYNHDFYFDCIKPSTGCGCGGSCQSIDANLQAALEKEFGSLENFKAEFIKGATGVFGSGWFWLVYNTKNQKLEFVGTSNAATPITEDKVPLLVVDVWEHAYYVDHRNARPAYLEKFYAHINWEFVAKAYEWALKEGMGSVSFYANELHPVK</sequence>
<name>SODF_CAMJJ</name>
<accession>A1VXQ2</accession>
<accession>P53640</accession>
<protein>
    <recommendedName>
        <fullName>Superoxide dismutase [Fe]</fullName>
        <ecNumber>1.15.1.1</ecNumber>
    </recommendedName>
</protein>
<feature type="chain" id="PRO_0000285826" description="Superoxide dismutase [Fe]">
    <location>
        <begin position="1"/>
        <end position="220"/>
    </location>
</feature>
<feature type="binding site" evidence="1">
    <location>
        <position position="26"/>
    </location>
    <ligand>
        <name>Fe cation</name>
        <dbReference type="ChEBI" id="CHEBI:24875"/>
    </ligand>
</feature>
<feature type="binding site" evidence="1">
    <location>
        <position position="73"/>
    </location>
    <ligand>
        <name>Fe cation</name>
        <dbReference type="ChEBI" id="CHEBI:24875"/>
    </ligand>
</feature>
<feature type="binding site" evidence="1">
    <location>
        <position position="164"/>
    </location>
    <ligand>
        <name>Fe cation</name>
        <dbReference type="ChEBI" id="CHEBI:24875"/>
    </ligand>
</feature>
<feature type="binding site" evidence="1">
    <location>
        <position position="168"/>
    </location>
    <ligand>
        <name>Fe cation</name>
        <dbReference type="ChEBI" id="CHEBI:24875"/>
    </ligand>
</feature>
<gene>
    <name type="primary">sodB</name>
    <name type="ordered locus">CJJ81176_0205</name>
</gene>
<evidence type="ECO:0000250" key="1"/>
<evidence type="ECO:0000305" key="2"/>
<keyword id="KW-0408">Iron</keyword>
<keyword id="KW-0479">Metal-binding</keyword>
<keyword id="KW-0560">Oxidoreductase</keyword>
<proteinExistence type="inferred from homology"/>
<dbReference type="EC" id="1.15.1.1"/>
<dbReference type="EMBL" id="U08132">
    <property type="protein sequence ID" value="AAA53139.1"/>
    <property type="molecule type" value="Genomic_DNA"/>
</dbReference>
<dbReference type="EMBL" id="CP000538">
    <property type="protein sequence ID" value="EAQ73242.1"/>
    <property type="molecule type" value="Genomic_DNA"/>
</dbReference>
<dbReference type="PIR" id="H81434">
    <property type="entry name" value="H81434"/>
</dbReference>
<dbReference type="RefSeq" id="WP_002851662.1">
    <property type="nucleotide sequence ID" value="NC_008787.1"/>
</dbReference>
<dbReference type="SMR" id="A1VXQ2"/>
<dbReference type="KEGG" id="cjj:CJJ81176_0205"/>
<dbReference type="eggNOG" id="COG0605">
    <property type="taxonomic scope" value="Bacteria"/>
</dbReference>
<dbReference type="HOGENOM" id="CLU_031625_0_0_7"/>
<dbReference type="Proteomes" id="UP000000646">
    <property type="component" value="Chromosome"/>
</dbReference>
<dbReference type="GO" id="GO:0046872">
    <property type="term" value="F:metal ion binding"/>
    <property type="evidence" value="ECO:0007669"/>
    <property type="project" value="UniProtKB-KW"/>
</dbReference>
<dbReference type="GO" id="GO:0004784">
    <property type="term" value="F:superoxide dismutase activity"/>
    <property type="evidence" value="ECO:0007669"/>
    <property type="project" value="UniProtKB-EC"/>
</dbReference>
<dbReference type="FunFam" id="1.10.287.990:FF:000002">
    <property type="entry name" value="Superoxide dismutase"/>
    <property type="match status" value="1"/>
</dbReference>
<dbReference type="Gene3D" id="1.10.287.990">
    <property type="entry name" value="Fe,Mn superoxide dismutase (SOD) domain"/>
    <property type="match status" value="1"/>
</dbReference>
<dbReference type="Gene3D" id="3.55.40.20">
    <property type="entry name" value="Iron/manganese superoxide dismutase, C-terminal domain"/>
    <property type="match status" value="1"/>
</dbReference>
<dbReference type="InterPro" id="IPR001189">
    <property type="entry name" value="Mn/Fe_SOD"/>
</dbReference>
<dbReference type="InterPro" id="IPR019833">
    <property type="entry name" value="Mn/Fe_SOD_BS"/>
</dbReference>
<dbReference type="InterPro" id="IPR019832">
    <property type="entry name" value="Mn/Fe_SOD_C"/>
</dbReference>
<dbReference type="InterPro" id="IPR019831">
    <property type="entry name" value="Mn/Fe_SOD_N"/>
</dbReference>
<dbReference type="InterPro" id="IPR036324">
    <property type="entry name" value="Mn/Fe_SOD_N_sf"/>
</dbReference>
<dbReference type="InterPro" id="IPR036314">
    <property type="entry name" value="SOD_C_sf"/>
</dbReference>
<dbReference type="PANTHER" id="PTHR42769">
    <property type="entry name" value="SUPEROXIDE DISMUTASE"/>
    <property type="match status" value="1"/>
</dbReference>
<dbReference type="PANTHER" id="PTHR42769:SF3">
    <property type="entry name" value="SUPEROXIDE DISMUTASE [FE] 2, CHLOROPLASTIC"/>
    <property type="match status" value="1"/>
</dbReference>
<dbReference type="Pfam" id="PF02777">
    <property type="entry name" value="Sod_Fe_C"/>
    <property type="match status" value="1"/>
</dbReference>
<dbReference type="Pfam" id="PF00081">
    <property type="entry name" value="Sod_Fe_N"/>
    <property type="match status" value="1"/>
</dbReference>
<dbReference type="PIRSF" id="PIRSF000349">
    <property type="entry name" value="SODismutase"/>
    <property type="match status" value="1"/>
</dbReference>
<dbReference type="PRINTS" id="PR01703">
    <property type="entry name" value="MNSODISMTASE"/>
</dbReference>
<dbReference type="SUPFAM" id="SSF54719">
    <property type="entry name" value="Fe,Mn superoxide dismutase (SOD), C-terminal domain"/>
    <property type="match status" value="1"/>
</dbReference>
<dbReference type="SUPFAM" id="SSF46609">
    <property type="entry name" value="Fe,Mn superoxide dismutase (SOD), N-terminal domain"/>
    <property type="match status" value="1"/>
</dbReference>
<dbReference type="PROSITE" id="PS00088">
    <property type="entry name" value="SOD_MN"/>
    <property type="match status" value="1"/>
</dbReference>